<gene>
    <name evidence="1" type="primary">purA</name>
    <name type="ordered locus">BSU40420</name>
</gene>
<comment type="function">
    <text evidence="1">Plays an important role in the de novo pathway of purine nucleotide biosynthesis. Catalyzes the first committed step in the biosynthesis of AMP from IMP.</text>
</comment>
<comment type="catalytic activity">
    <reaction evidence="1">
        <text>IMP + L-aspartate + GTP = N(6)-(1,2-dicarboxyethyl)-AMP + GDP + phosphate + 2 H(+)</text>
        <dbReference type="Rhea" id="RHEA:15753"/>
        <dbReference type="ChEBI" id="CHEBI:15378"/>
        <dbReference type="ChEBI" id="CHEBI:29991"/>
        <dbReference type="ChEBI" id="CHEBI:37565"/>
        <dbReference type="ChEBI" id="CHEBI:43474"/>
        <dbReference type="ChEBI" id="CHEBI:57567"/>
        <dbReference type="ChEBI" id="CHEBI:58053"/>
        <dbReference type="ChEBI" id="CHEBI:58189"/>
        <dbReference type="EC" id="6.3.4.4"/>
    </reaction>
</comment>
<comment type="cofactor">
    <cofactor evidence="1">
        <name>Mg(2+)</name>
        <dbReference type="ChEBI" id="CHEBI:18420"/>
    </cofactor>
    <text evidence="1">Binds 1 Mg(2+) ion per subunit.</text>
</comment>
<comment type="pathway">
    <text evidence="1">Purine metabolism; AMP biosynthesis via de novo pathway; AMP from IMP: step 1/2.</text>
</comment>
<comment type="subunit">
    <text evidence="1">Homodimer.</text>
</comment>
<comment type="subcellular location">
    <subcellularLocation>
        <location evidence="1">Cytoplasm</location>
    </subcellularLocation>
</comment>
<comment type="similarity">
    <text evidence="1">Belongs to the adenylosuccinate synthetase family.</text>
</comment>
<evidence type="ECO:0000255" key="1">
    <source>
        <dbReference type="HAMAP-Rule" id="MF_00011"/>
    </source>
</evidence>
<evidence type="ECO:0000305" key="2"/>
<feature type="chain" id="PRO_0000095146" description="Adenylosuccinate synthetase">
    <location>
        <begin position="1"/>
        <end position="430"/>
    </location>
</feature>
<feature type="active site" description="Proton acceptor" evidence="1">
    <location>
        <position position="13"/>
    </location>
</feature>
<feature type="active site" description="Proton donor" evidence="1">
    <location>
        <position position="41"/>
    </location>
</feature>
<feature type="binding site" evidence="1">
    <location>
        <begin position="12"/>
        <end position="18"/>
    </location>
    <ligand>
        <name>GTP</name>
        <dbReference type="ChEBI" id="CHEBI:37565"/>
    </ligand>
</feature>
<feature type="binding site" description="in other chain" evidence="1">
    <location>
        <begin position="13"/>
        <end position="16"/>
    </location>
    <ligand>
        <name>IMP</name>
        <dbReference type="ChEBI" id="CHEBI:58053"/>
        <note>ligand shared between dimeric partners</note>
    </ligand>
</feature>
<feature type="binding site" evidence="1">
    <location>
        <position position="13"/>
    </location>
    <ligand>
        <name>Mg(2+)</name>
        <dbReference type="ChEBI" id="CHEBI:18420"/>
    </ligand>
</feature>
<feature type="binding site" description="in other chain" evidence="1">
    <location>
        <begin position="38"/>
        <end position="41"/>
    </location>
    <ligand>
        <name>IMP</name>
        <dbReference type="ChEBI" id="CHEBI:58053"/>
        <note>ligand shared between dimeric partners</note>
    </ligand>
</feature>
<feature type="binding site" evidence="1">
    <location>
        <begin position="40"/>
        <end position="42"/>
    </location>
    <ligand>
        <name>GTP</name>
        <dbReference type="ChEBI" id="CHEBI:37565"/>
    </ligand>
</feature>
<feature type="binding site" evidence="1">
    <location>
        <position position="40"/>
    </location>
    <ligand>
        <name>Mg(2+)</name>
        <dbReference type="ChEBI" id="CHEBI:18420"/>
    </ligand>
</feature>
<feature type="binding site" description="in other chain" evidence="1">
    <location>
        <position position="128"/>
    </location>
    <ligand>
        <name>IMP</name>
        <dbReference type="ChEBI" id="CHEBI:58053"/>
        <note>ligand shared between dimeric partners</note>
    </ligand>
</feature>
<feature type="binding site" evidence="1">
    <location>
        <position position="142"/>
    </location>
    <ligand>
        <name>IMP</name>
        <dbReference type="ChEBI" id="CHEBI:58053"/>
        <note>ligand shared between dimeric partners</note>
    </ligand>
</feature>
<feature type="binding site" description="in other chain" evidence="1">
    <location>
        <position position="223"/>
    </location>
    <ligand>
        <name>IMP</name>
        <dbReference type="ChEBI" id="CHEBI:58053"/>
        <note>ligand shared between dimeric partners</note>
    </ligand>
</feature>
<feature type="binding site" description="in other chain" evidence="1">
    <location>
        <position position="238"/>
    </location>
    <ligand>
        <name>IMP</name>
        <dbReference type="ChEBI" id="CHEBI:58053"/>
        <note>ligand shared between dimeric partners</note>
    </ligand>
</feature>
<feature type="binding site" description="in other chain" evidence="1">
    <location>
        <position position="302"/>
    </location>
    <ligand>
        <name>IMP</name>
        <dbReference type="ChEBI" id="CHEBI:58053"/>
        <note>ligand shared between dimeric partners</note>
    </ligand>
</feature>
<feature type="binding site" evidence="1">
    <location>
        <begin position="330"/>
        <end position="332"/>
    </location>
    <ligand>
        <name>GTP</name>
        <dbReference type="ChEBI" id="CHEBI:37565"/>
    </ligand>
</feature>
<feature type="binding site" evidence="1">
    <location>
        <begin position="412"/>
        <end position="414"/>
    </location>
    <ligand>
        <name>GTP</name>
        <dbReference type="ChEBI" id="CHEBI:37565"/>
    </ligand>
</feature>
<feature type="sequence conflict" description="In Ref. 2; BAA05174." evidence="2" ref="2">
    <original>AVSQSVLVSARP</original>
    <variation>GGVTIGSGVGPT</variation>
    <location>
        <begin position="245"/>
        <end position="256"/>
    </location>
</feature>
<feature type="sequence conflict" description="In Ref. 2; BAA05174/CAB16079." evidence="2" ref="2">
    <original>P</original>
    <variation>R</variation>
    <location>
        <position position="304"/>
    </location>
</feature>
<feature type="sequence conflict" description="In Ref. 2; BAA05174/CAB16079." evidence="2" ref="2">
    <original>R</original>
    <variation>A</variation>
    <location>
        <position position="345"/>
    </location>
</feature>
<reference key="1">
    <citation type="journal article" date="1992" name="J. Bacteriol.">
        <title>Cloning and sequence of Bacillus subtilis purA and guaA, involved in the conversion of IMP to AMP and GMP.</title>
        <authorList>
            <person name="Maentsaelae P."/>
            <person name="Zalkin H."/>
        </authorList>
    </citation>
    <scope>NUCLEOTIDE SEQUENCE [GENOMIC DNA]</scope>
    <source>
        <strain>168 / DE1</strain>
    </source>
</reference>
<reference key="2">
    <citation type="journal article" date="1994" name="DNA Res.">
        <title>Systematic sequencing of the 180 kilobase region of the Bacillus subtilis chromosome containing the replication origin.</title>
        <authorList>
            <person name="Ogasawara N."/>
            <person name="Nakai S."/>
            <person name="Yoshikawa H."/>
        </authorList>
    </citation>
    <scope>NUCLEOTIDE SEQUENCE [GENOMIC DNA]</scope>
    <source>
        <strain>168</strain>
    </source>
</reference>
<reference key="3">
    <citation type="journal article" date="1997" name="Nature">
        <title>The complete genome sequence of the Gram-positive bacterium Bacillus subtilis.</title>
        <authorList>
            <person name="Kunst F."/>
            <person name="Ogasawara N."/>
            <person name="Moszer I."/>
            <person name="Albertini A.M."/>
            <person name="Alloni G."/>
            <person name="Azevedo V."/>
            <person name="Bertero M.G."/>
            <person name="Bessieres P."/>
            <person name="Bolotin A."/>
            <person name="Borchert S."/>
            <person name="Borriss R."/>
            <person name="Boursier L."/>
            <person name="Brans A."/>
            <person name="Braun M."/>
            <person name="Brignell S.C."/>
            <person name="Bron S."/>
            <person name="Brouillet S."/>
            <person name="Bruschi C.V."/>
            <person name="Caldwell B."/>
            <person name="Capuano V."/>
            <person name="Carter N.M."/>
            <person name="Choi S.-K."/>
            <person name="Codani J.-J."/>
            <person name="Connerton I.F."/>
            <person name="Cummings N.J."/>
            <person name="Daniel R.A."/>
            <person name="Denizot F."/>
            <person name="Devine K.M."/>
            <person name="Duesterhoeft A."/>
            <person name="Ehrlich S.D."/>
            <person name="Emmerson P.T."/>
            <person name="Entian K.-D."/>
            <person name="Errington J."/>
            <person name="Fabret C."/>
            <person name="Ferrari E."/>
            <person name="Foulger D."/>
            <person name="Fritz C."/>
            <person name="Fujita M."/>
            <person name="Fujita Y."/>
            <person name="Fuma S."/>
            <person name="Galizzi A."/>
            <person name="Galleron N."/>
            <person name="Ghim S.-Y."/>
            <person name="Glaser P."/>
            <person name="Goffeau A."/>
            <person name="Golightly E.J."/>
            <person name="Grandi G."/>
            <person name="Guiseppi G."/>
            <person name="Guy B.J."/>
            <person name="Haga K."/>
            <person name="Haiech J."/>
            <person name="Harwood C.R."/>
            <person name="Henaut A."/>
            <person name="Hilbert H."/>
            <person name="Holsappel S."/>
            <person name="Hosono S."/>
            <person name="Hullo M.-F."/>
            <person name="Itaya M."/>
            <person name="Jones L.-M."/>
            <person name="Joris B."/>
            <person name="Karamata D."/>
            <person name="Kasahara Y."/>
            <person name="Klaerr-Blanchard M."/>
            <person name="Klein C."/>
            <person name="Kobayashi Y."/>
            <person name="Koetter P."/>
            <person name="Koningstein G."/>
            <person name="Krogh S."/>
            <person name="Kumano M."/>
            <person name="Kurita K."/>
            <person name="Lapidus A."/>
            <person name="Lardinois S."/>
            <person name="Lauber J."/>
            <person name="Lazarevic V."/>
            <person name="Lee S.-M."/>
            <person name="Levine A."/>
            <person name="Liu H."/>
            <person name="Masuda S."/>
            <person name="Mauel C."/>
            <person name="Medigue C."/>
            <person name="Medina N."/>
            <person name="Mellado R.P."/>
            <person name="Mizuno M."/>
            <person name="Moestl D."/>
            <person name="Nakai S."/>
            <person name="Noback M."/>
            <person name="Noone D."/>
            <person name="O'Reilly M."/>
            <person name="Ogawa K."/>
            <person name="Ogiwara A."/>
            <person name="Oudega B."/>
            <person name="Park S.-H."/>
            <person name="Parro V."/>
            <person name="Pohl T.M."/>
            <person name="Portetelle D."/>
            <person name="Porwollik S."/>
            <person name="Prescott A.M."/>
            <person name="Presecan E."/>
            <person name="Pujic P."/>
            <person name="Purnelle B."/>
            <person name="Rapoport G."/>
            <person name="Rey M."/>
            <person name="Reynolds S."/>
            <person name="Rieger M."/>
            <person name="Rivolta C."/>
            <person name="Rocha E."/>
            <person name="Roche B."/>
            <person name="Rose M."/>
            <person name="Sadaie Y."/>
            <person name="Sato T."/>
            <person name="Scanlan E."/>
            <person name="Schleich S."/>
            <person name="Schroeter R."/>
            <person name="Scoffone F."/>
            <person name="Sekiguchi J."/>
            <person name="Sekowska A."/>
            <person name="Seror S.J."/>
            <person name="Serror P."/>
            <person name="Shin B.-S."/>
            <person name="Soldo B."/>
            <person name="Sorokin A."/>
            <person name="Tacconi E."/>
            <person name="Takagi T."/>
            <person name="Takahashi H."/>
            <person name="Takemaru K."/>
            <person name="Takeuchi M."/>
            <person name="Tamakoshi A."/>
            <person name="Tanaka T."/>
            <person name="Terpstra P."/>
            <person name="Tognoni A."/>
            <person name="Tosato V."/>
            <person name="Uchiyama S."/>
            <person name="Vandenbol M."/>
            <person name="Vannier F."/>
            <person name="Vassarotti A."/>
            <person name="Viari A."/>
            <person name="Wambutt R."/>
            <person name="Wedler E."/>
            <person name="Wedler H."/>
            <person name="Weitzenegger T."/>
            <person name="Winters P."/>
            <person name="Wipat A."/>
            <person name="Yamamoto H."/>
            <person name="Yamane K."/>
            <person name="Yasumoto K."/>
            <person name="Yata K."/>
            <person name="Yoshida K."/>
            <person name="Yoshikawa H.-F."/>
            <person name="Zumstein E."/>
            <person name="Yoshikawa H."/>
            <person name="Danchin A."/>
        </authorList>
    </citation>
    <scope>NUCLEOTIDE SEQUENCE [LARGE SCALE GENOMIC DNA]</scope>
    <source>
        <strain>168</strain>
    </source>
</reference>
<name>PURA_BACSU</name>
<keyword id="KW-0963">Cytoplasm</keyword>
<keyword id="KW-0342">GTP-binding</keyword>
<keyword id="KW-0436">Ligase</keyword>
<keyword id="KW-0460">Magnesium</keyword>
<keyword id="KW-0479">Metal-binding</keyword>
<keyword id="KW-0547">Nucleotide-binding</keyword>
<keyword id="KW-0658">Purine biosynthesis</keyword>
<keyword id="KW-1185">Reference proteome</keyword>
<sequence length="430" mass="47910">MSSVVVVGTQWGDEGKGKITDFLSENAEVIARYQGGNNAGHTIKFDGITYKLHLIPSGIFYKDKTCVIGNGMVVDPKALVTELAYLHERNVSTDNLRISNRAHVILPYHLKLDEVEEERKGANKIGTTKKGIGPAYMDKAARIGIRIADLLDRDAFAEKLERNLEEKNRLLEKMYETEGFKLEDILDEYYEYGQQIKKYVCDTSVVLNDALDEGRRVLFEGAQGVMLDIDQGTYPFVTSSNPVAAVSQSVLVSARPKIKHVVGVSKAYTTRVGDGPFPTELKDEIGDQIREVGREYGTTTGRPPRVGWFDSVVVRHARRVSGITDLSLNSIDVLAGIETLKICVRYRYKGEIIEEFPASLKALAECEPVYEEMPGWTEDITGAKSLSELPENARHYLERVSQLTGIPLSIFSVGPDRSQTNVLRSVYRAN</sequence>
<proteinExistence type="inferred from homology"/>
<organism>
    <name type="scientific">Bacillus subtilis (strain 168)</name>
    <dbReference type="NCBI Taxonomy" id="224308"/>
    <lineage>
        <taxon>Bacteria</taxon>
        <taxon>Bacillati</taxon>
        <taxon>Bacillota</taxon>
        <taxon>Bacilli</taxon>
        <taxon>Bacillales</taxon>
        <taxon>Bacillaceae</taxon>
        <taxon>Bacillus</taxon>
    </lineage>
</organism>
<accession>P29726</accession>
<protein>
    <recommendedName>
        <fullName evidence="1">Adenylosuccinate synthetase</fullName>
        <shortName evidence="1">AMPSase</shortName>
        <shortName evidence="1">AdSS</shortName>
        <ecNumber evidence="1">6.3.4.4</ecNumber>
    </recommendedName>
    <alternativeName>
        <fullName evidence="1">IMP--aspartate ligase</fullName>
    </alternativeName>
</protein>
<dbReference type="EC" id="6.3.4.4" evidence="1"/>
<dbReference type="EMBL" id="M83690">
    <property type="protein sequence ID" value="AAA22203.1"/>
    <property type="molecule type" value="Genomic_DNA"/>
</dbReference>
<dbReference type="EMBL" id="D26185">
    <property type="protein sequence ID" value="BAA05174.1"/>
    <property type="molecule type" value="Genomic_DNA"/>
</dbReference>
<dbReference type="EMBL" id="AL009126">
    <property type="protein sequence ID" value="CAB16079.1"/>
    <property type="molecule type" value="Genomic_DNA"/>
</dbReference>
<dbReference type="PIR" id="S65968">
    <property type="entry name" value="A42280"/>
</dbReference>
<dbReference type="RefSeq" id="NP_391922.1">
    <property type="nucleotide sequence ID" value="NC_000964.3"/>
</dbReference>
<dbReference type="RefSeq" id="WP_003243325.1">
    <property type="nucleotide sequence ID" value="NZ_OZ025638.1"/>
</dbReference>
<dbReference type="SMR" id="P29726"/>
<dbReference type="FunCoup" id="P29726">
    <property type="interactions" value="783"/>
</dbReference>
<dbReference type="IntAct" id="P29726">
    <property type="interactions" value="1"/>
</dbReference>
<dbReference type="MINT" id="P29726"/>
<dbReference type="STRING" id="224308.BSU40420"/>
<dbReference type="jPOST" id="P29726"/>
<dbReference type="PaxDb" id="224308-BSU40420"/>
<dbReference type="EnsemblBacteria" id="CAB16079">
    <property type="protein sequence ID" value="CAB16079"/>
    <property type="gene ID" value="BSU_40420"/>
</dbReference>
<dbReference type="GeneID" id="937805"/>
<dbReference type="KEGG" id="bsu:BSU40420"/>
<dbReference type="PATRIC" id="fig|224308.43.peg.4243"/>
<dbReference type="eggNOG" id="COG0104">
    <property type="taxonomic scope" value="Bacteria"/>
</dbReference>
<dbReference type="InParanoid" id="P29726"/>
<dbReference type="OrthoDB" id="9807553at2"/>
<dbReference type="BioCyc" id="BSUB:BSU40420-MONOMER"/>
<dbReference type="BRENDA" id="6.3.4.4">
    <property type="organism ID" value="658"/>
</dbReference>
<dbReference type="UniPathway" id="UPA00075">
    <property type="reaction ID" value="UER00335"/>
</dbReference>
<dbReference type="Proteomes" id="UP000001570">
    <property type="component" value="Chromosome"/>
</dbReference>
<dbReference type="GO" id="GO:0005737">
    <property type="term" value="C:cytoplasm"/>
    <property type="evidence" value="ECO:0000318"/>
    <property type="project" value="GO_Central"/>
</dbReference>
<dbReference type="GO" id="GO:0004019">
    <property type="term" value="F:adenylosuccinate synthase activity"/>
    <property type="evidence" value="ECO:0000318"/>
    <property type="project" value="GO_Central"/>
</dbReference>
<dbReference type="GO" id="GO:0005525">
    <property type="term" value="F:GTP binding"/>
    <property type="evidence" value="ECO:0007669"/>
    <property type="project" value="UniProtKB-UniRule"/>
</dbReference>
<dbReference type="GO" id="GO:0000287">
    <property type="term" value="F:magnesium ion binding"/>
    <property type="evidence" value="ECO:0007669"/>
    <property type="project" value="UniProtKB-UniRule"/>
</dbReference>
<dbReference type="GO" id="GO:0044208">
    <property type="term" value="P:'de novo' AMP biosynthetic process"/>
    <property type="evidence" value="ECO:0000318"/>
    <property type="project" value="GO_Central"/>
</dbReference>
<dbReference type="GO" id="GO:0046040">
    <property type="term" value="P:IMP metabolic process"/>
    <property type="evidence" value="ECO:0000318"/>
    <property type="project" value="GO_Central"/>
</dbReference>
<dbReference type="CDD" id="cd03108">
    <property type="entry name" value="AdSS"/>
    <property type="match status" value="1"/>
</dbReference>
<dbReference type="FunFam" id="1.10.300.10:FF:000001">
    <property type="entry name" value="Adenylosuccinate synthetase"/>
    <property type="match status" value="1"/>
</dbReference>
<dbReference type="FunFam" id="3.90.170.10:FF:000001">
    <property type="entry name" value="Adenylosuccinate synthetase"/>
    <property type="match status" value="1"/>
</dbReference>
<dbReference type="Gene3D" id="3.40.440.10">
    <property type="entry name" value="Adenylosuccinate Synthetase, subunit A, domain 1"/>
    <property type="match status" value="1"/>
</dbReference>
<dbReference type="Gene3D" id="1.10.300.10">
    <property type="entry name" value="Adenylosuccinate Synthetase, subunit A, domain 2"/>
    <property type="match status" value="1"/>
</dbReference>
<dbReference type="Gene3D" id="3.90.170.10">
    <property type="entry name" value="Adenylosuccinate Synthetase, subunit A, domain 3"/>
    <property type="match status" value="1"/>
</dbReference>
<dbReference type="HAMAP" id="MF_00011">
    <property type="entry name" value="Adenylosucc_synth"/>
    <property type="match status" value="1"/>
</dbReference>
<dbReference type="InterPro" id="IPR018220">
    <property type="entry name" value="Adenylosuccin_syn_GTP-bd"/>
</dbReference>
<dbReference type="InterPro" id="IPR033128">
    <property type="entry name" value="Adenylosuccin_syn_Lys_AS"/>
</dbReference>
<dbReference type="InterPro" id="IPR042109">
    <property type="entry name" value="Adenylosuccinate_synth_dom1"/>
</dbReference>
<dbReference type="InterPro" id="IPR042110">
    <property type="entry name" value="Adenylosuccinate_synth_dom2"/>
</dbReference>
<dbReference type="InterPro" id="IPR042111">
    <property type="entry name" value="Adenylosuccinate_synth_dom3"/>
</dbReference>
<dbReference type="InterPro" id="IPR001114">
    <property type="entry name" value="Adenylosuccinate_synthetase"/>
</dbReference>
<dbReference type="InterPro" id="IPR027417">
    <property type="entry name" value="P-loop_NTPase"/>
</dbReference>
<dbReference type="NCBIfam" id="NF002223">
    <property type="entry name" value="PRK01117.1"/>
    <property type="match status" value="1"/>
</dbReference>
<dbReference type="NCBIfam" id="TIGR00184">
    <property type="entry name" value="purA"/>
    <property type="match status" value="1"/>
</dbReference>
<dbReference type="PANTHER" id="PTHR11846">
    <property type="entry name" value="ADENYLOSUCCINATE SYNTHETASE"/>
    <property type="match status" value="1"/>
</dbReference>
<dbReference type="PANTHER" id="PTHR11846:SF0">
    <property type="entry name" value="ADENYLOSUCCINATE SYNTHETASE"/>
    <property type="match status" value="1"/>
</dbReference>
<dbReference type="Pfam" id="PF00709">
    <property type="entry name" value="Adenylsucc_synt"/>
    <property type="match status" value="1"/>
</dbReference>
<dbReference type="SMART" id="SM00788">
    <property type="entry name" value="Adenylsucc_synt"/>
    <property type="match status" value="1"/>
</dbReference>
<dbReference type="SUPFAM" id="SSF52540">
    <property type="entry name" value="P-loop containing nucleoside triphosphate hydrolases"/>
    <property type="match status" value="1"/>
</dbReference>
<dbReference type="PROSITE" id="PS01266">
    <property type="entry name" value="ADENYLOSUCCIN_SYN_1"/>
    <property type="match status" value="1"/>
</dbReference>
<dbReference type="PROSITE" id="PS00513">
    <property type="entry name" value="ADENYLOSUCCIN_SYN_2"/>
    <property type="match status" value="1"/>
</dbReference>